<protein>
    <recommendedName>
        <fullName evidence="1">Phosphonates import ATP-binding protein PhnC</fullName>
        <ecNumber evidence="1">7.3.2.2</ecNumber>
    </recommendedName>
</protein>
<proteinExistence type="inferred from homology"/>
<evidence type="ECO:0000255" key="1">
    <source>
        <dbReference type="HAMAP-Rule" id="MF_01713"/>
    </source>
</evidence>
<dbReference type="EC" id="7.3.2.2" evidence="1"/>
<dbReference type="EMBL" id="CP000158">
    <property type="protein sequence ID" value="ABI77580.1"/>
    <property type="molecule type" value="Genomic_DNA"/>
</dbReference>
<dbReference type="RefSeq" id="WP_011647453.1">
    <property type="nucleotide sequence ID" value="NC_008358.1"/>
</dbReference>
<dbReference type="SMR" id="Q0BZD8"/>
<dbReference type="STRING" id="228405.HNE_2460"/>
<dbReference type="KEGG" id="hne:HNE_2460"/>
<dbReference type="eggNOG" id="COG3638">
    <property type="taxonomic scope" value="Bacteria"/>
</dbReference>
<dbReference type="HOGENOM" id="CLU_000604_1_22_5"/>
<dbReference type="Proteomes" id="UP000001959">
    <property type="component" value="Chromosome"/>
</dbReference>
<dbReference type="GO" id="GO:0005886">
    <property type="term" value="C:plasma membrane"/>
    <property type="evidence" value="ECO:0007669"/>
    <property type="project" value="UniProtKB-SubCell"/>
</dbReference>
<dbReference type="GO" id="GO:0015416">
    <property type="term" value="F:ABC-type phosphonate transporter activity"/>
    <property type="evidence" value="ECO:0007669"/>
    <property type="project" value="UniProtKB-EC"/>
</dbReference>
<dbReference type="GO" id="GO:0005524">
    <property type="term" value="F:ATP binding"/>
    <property type="evidence" value="ECO:0007669"/>
    <property type="project" value="UniProtKB-KW"/>
</dbReference>
<dbReference type="GO" id="GO:0016887">
    <property type="term" value="F:ATP hydrolysis activity"/>
    <property type="evidence" value="ECO:0007669"/>
    <property type="project" value="InterPro"/>
</dbReference>
<dbReference type="CDD" id="cd03256">
    <property type="entry name" value="ABC_PhnC_transporter"/>
    <property type="match status" value="1"/>
</dbReference>
<dbReference type="Gene3D" id="3.40.50.300">
    <property type="entry name" value="P-loop containing nucleotide triphosphate hydrolases"/>
    <property type="match status" value="1"/>
</dbReference>
<dbReference type="InterPro" id="IPR003593">
    <property type="entry name" value="AAA+_ATPase"/>
</dbReference>
<dbReference type="InterPro" id="IPR003439">
    <property type="entry name" value="ABC_transporter-like_ATP-bd"/>
</dbReference>
<dbReference type="InterPro" id="IPR017871">
    <property type="entry name" value="ABC_transporter-like_CS"/>
</dbReference>
<dbReference type="InterPro" id="IPR012693">
    <property type="entry name" value="ABC_transpr_PhnC"/>
</dbReference>
<dbReference type="InterPro" id="IPR050086">
    <property type="entry name" value="MetN_ABC_transporter-like"/>
</dbReference>
<dbReference type="InterPro" id="IPR027417">
    <property type="entry name" value="P-loop_NTPase"/>
</dbReference>
<dbReference type="PANTHER" id="PTHR43166">
    <property type="entry name" value="AMINO ACID IMPORT ATP-BINDING PROTEIN"/>
    <property type="match status" value="1"/>
</dbReference>
<dbReference type="PANTHER" id="PTHR43166:SF6">
    <property type="entry name" value="PHOSPHONATES IMPORT ATP-BINDING PROTEIN PHNC"/>
    <property type="match status" value="1"/>
</dbReference>
<dbReference type="Pfam" id="PF00005">
    <property type="entry name" value="ABC_tran"/>
    <property type="match status" value="1"/>
</dbReference>
<dbReference type="SMART" id="SM00382">
    <property type="entry name" value="AAA"/>
    <property type="match status" value="1"/>
</dbReference>
<dbReference type="SUPFAM" id="SSF52540">
    <property type="entry name" value="P-loop containing nucleoside triphosphate hydrolases"/>
    <property type="match status" value="1"/>
</dbReference>
<dbReference type="PROSITE" id="PS00211">
    <property type="entry name" value="ABC_TRANSPORTER_1"/>
    <property type="match status" value="1"/>
</dbReference>
<dbReference type="PROSITE" id="PS50893">
    <property type="entry name" value="ABC_TRANSPORTER_2"/>
    <property type="match status" value="1"/>
</dbReference>
<dbReference type="PROSITE" id="PS51249">
    <property type="entry name" value="PHNC"/>
    <property type="match status" value="1"/>
</dbReference>
<sequence>MTDEPALESAALPVLCLENTSAVYAGGVVALSRFNLEVQAGEFCVILGPSGSGKSTLLRLISGLVPTSSGTVTIGGIKMAPPTRRKARQRLGMVHQDHGLIDRLSVLDNVMAGCAGSLPFWRLMLRMYPRPVVDAACQLLDEVGLTEAQANRRARELSGGQRQRVGIARALMGTPLLILADEPVASLDPQTSRIILALLRRAAKDRGIAVLCSLHQMDLAREFADRIVVMRNGRPVFNDCPAELSGFLERSAIPPKRSGAA</sequence>
<organism>
    <name type="scientific">Hyphomonas neptunium (strain ATCC 15444)</name>
    <dbReference type="NCBI Taxonomy" id="228405"/>
    <lineage>
        <taxon>Bacteria</taxon>
        <taxon>Pseudomonadati</taxon>
        <taxon>Pseudomonadota</taxon>
        <taxon>Alphaproteobacteria</taxon>
        <taxon>Hyphomonadales</taxon>
        <taxon>Hyphomonadaceae</taxon>
        <taxon>Hyphomonas</taxon>
    </lineage>
</organism>
<gene>
    <name evidence="1" type="primary">phnC</name>
    <name type="ordered locus">HNE_2460</name>
</gene>
<keyword id="KW-0067">ATP-binding</keyword>
<keyword id="KW-0997">Cell inner membrane</keyword>
<keyword id="KW-1003">Cell membrane</keyword>
<keyword id="KW-0472">Membrane</keyword>
<keyword id="KW-0547">Nucleotide-binding</keyword>
<keyword id="KW-0918">Phosphonate transport</keyword>
<keyword id="KW-1185">Reference proteome</keyword>
<keyword id="KW-1278">Translocase</keyword>
<keyword id="KW-0813">Transport</keyword>
<reference key="1">
    <citation type="journal article" date="2006" name="J. Bacteriol.">
        <title>Comparative genomic evidence for a close relationship between the dimorphic prosthecate bacteria Hyphomonas neptunium and Caulobacter crescentus.</title>
        <authorList>
            <person name="Badger J.H."/>
            <person name="Hoover T.R."/>
            <person name="Brun Y.V."/>
            <person name="Weiner R.M."/>
            <person name="Laub M.T."/>
            <person name="Alexandre G."/>
            <person name="Mrazek J."/>
            <person name="Ren Q."/>
            <person name="Paulsen I.T."/>
            <person name="Nelson K.E."/>
            <person name="Khouri H.M."/>
            <person name="Radune D."/>
            <person name="Sosa J."/>
            <person name="Dodson R.J."/>
            <person name="Sullivan S.A."/>
            <person name="Rosovitz M.J."/>
            <person name="Madupu R."/>
            <person name="Brinkac L.M."/>
            <person name="Durkin A.S."/>
            <person name="Daugherty S.C."/>
            <person name="Kothari S.P."/>
            <person name="Giglio M.G."/>
            <person name="Zhou L."/>
            <person name="Haft D.H."/>
            <person name="Selengut J.D."/>
            <person name="Davidsen T.M."/>
            <person name="Yang Q."/>
            <person name="Zafar N."/>
            <person name="Ward N.L."/>
        </authorList>
    </citation>
    <scope>NUCLEOTIDE SEQUENCE [LARGE SCALE GENOMIC DNA]</scope>
    <source>
        <strain>ATCC 15444</strain>
    </source>
</reference>
<comment type="function">
    <text evidence="1">Part of the ABC transporter complex PhnCDE involved in phosphonates import. Responsible for energy coupling to the transport system.</text>
</comment>
<comment type="catalytic activity">
    <reaction evidence="1">
        <text>phosphonate(out) + ATP + H2O = phosphonate(in) + ADP + phosphate + H(+)</text>
        <dbReference type="Rhea" id="RHEA:18065"/>
        <dbReference type="ChEBI" id="CHEBI:15377"/>
        <dbReference type="ChEBI" id="CHEBI:15378"/>
        <dbReference type="ChEBI" id="CHEBI:16215"/>
        <dbReference type="ChEBI" id="CHEBI:30616"/>
        <dbReference type="ChEBI" id="CHEBI:43474"/>
        <dbReference type="ChEBI" id="CHEBI:456216"/>
        <dbReference type="EC" id="7.3.2.2"/>
    </reaction>
</comment>
<comment type="subunit">
    <text evidence="1">The complex is composed of two ATP-binding proteins (PhnC), two transmembrane proteins (PhnE) and a solute-binding protein (PhnD).</text>
</comment>
<comment type="subcellular location">
    <subcellularLocation>
        <location evidence="1">Cell inner membrane</location>
        <topology evidence="1">Peripheral membrane protein</topology>
    </subcellularLocation>
</comment>
<comment type="similarity">
    <text evidence="1">Belongs to the ABC transporter superfamily. Phosphonates importer (TC 3.A.1.9.1) family.</text>
</comment>
<accession>Q0BZD8</accession>
<feature type="chain" id="PRO_0000274714" description="Phosphonates import ATP-binding protein PhnC">
    <location>
        <begin position="1"/>
        <end position="261"/>
    </location>
</feature>
<feature type="domain" description="ABC transporter" evidence="1">
    <location>
        <begin position="15"/>
        <end position="257"/>
    </location>
</feature>
<feature type="binding site" evidence="1">
    <location>
        <begin position="48"/>
        <end position="55"/>
    </location>
    <ligand>
        <name>ATP</name>
        <dbReference type="ChEBI" id="CHEBI:30616"/>
    </ligand>
</feature>
<name>PHNC_HYPNA</name>